<dbReference type="EMBL" id="AE014297">
    <property type="protein sequence ID" value="AAF55325.2"/>
    <property type="molecule type" value="Genomic_DNA"/>
</dbReference>
<dbReference type="EMBL" id="AY071188">
    <property type="protein sequence ID" value="AAL48810.1"/>
    <property type="molecule type" value="mRNA"/>
</dbReference>
<dbReference type="RefSeq" id="NP_650552.3">
    <property type="nucleotide sequence ID" value="NM_142295.4"/>
</dbReference>
<dbReference type="SMR" id="Q8SZ16"/>
<dbReference type="BioGRID" id="67049">
    <property type="interactions" value="3"/>
</dbReference>
<dbReference type="FunCoup" id="Q8SZ16">
    <property type="interactions" value="1090"/>
</dbReference>
<dbReference type="IntAct" id="Q8SZ16">
    <property type="interactions" value="2"/>
</dbReference>
<dbReference type="STRING" id="7227.FBpp0082759"/>
<dbReference type="PaxDb" id="7227-FBpp0082759"/>
<dbReference type="DNASU" id="42004"/>
<dbReference type="EnsemblMetazoa" id="FBtr0083308">
    <property type="protein sequence ID" value="FBpp0082759"/>
    <property type="gene ID" value="FBgn0038437"/>
</dbReference>
<dbReference type="GeneID" id="42004"/>
<dbReference type="KEGG" id="dme:Dmel_CG14898"/>
<dbReference type="UCSC" id="CG14898-RA">
    <property type="organism name" value="d. melanogaster"/>
</dbReference>
<dbReference type="AGR" id="FB:FBgn0038437"/>
<dbReference type="CTD" id="57001"/>
<dbReference type="FlyBase" id="FBgn0038437">
    <property type="gene designation" value="Sdhaf3"/>
</dbReference>
<dbReference type="VEuPathDB" id="VectorBase:FBgn0038437"/>
<dbReference type="eggNOG" id="KOG4100">
    <property type="taxonomic scope" value="Eukaryota"/>
</dbReference>
<dbReference type="GeneTree" id="ENSGT00390000010029"/>
<dbReference type="HOGENOM" id="CLU_102310_2_0_1"/>
<dbReference type="InParanoid" id="Q8SZ16"/>
<dbReference type="OMA" id="KRHKNCN"/>
<dbReference type="OrthoDB" id="278329at2759"/>
<dbReference type="PhylomeDB" id="Q8SZ16"/>
<dbReference type="BioGRID-ORCS" id="42004">
    <property type="hits" value="0 hits in 1 CRISPR screen"/>
</dbReference>
<dbReference type="GenomeRNAi" id="42004"/>
<dbReference type="PRO" id="PR:Q8SZ16"/>
<dbReference type="Proteomes" id="UP000000803">
    <property type="component" value="Chromosome 3R"/>
</dbReference>
<dbReference type="Bgee" id="FBgn0038437">
    <property type="expression patterns" value="Expressed in medullary intrinsic neuron Mi1 (Drosophila) in brain and 89 other cell types or tissues"/>
</dbReference>
<dbReference type="ExpressionAtlas" id="Q8SZ16">
    <property type="expression patterns" value="baseline and differential"/>
</dbReference>
<dbReference type="GO" id="GO:0005758">
    <property type="term" value="C:mitochondrial intermembrane space"/>
    <property type="evidence" value="ECO:0000250"/>
    <property type="project" value="FlyBase"/>
</dbReference>
<dbReference type="GO" id="GO:0005759">
    <property type="term" value="C:mitochondrial matrix"/>
    <property type="evidence" value="ECO:0007669"/>
    <property type="project" value="UniProtKB-SubCell"/>
</dbReference>
<dbReference type="GO" id="GO:0034553">
    <property type="term" value="P:mitochondrial respiratory chain complex II assembly"/>
    <property type="evidence" value="ECO:0000250"/>
    <property type="project" value="FlyBase"/>
</dbReference>
<dbReference type="GO" id="GO:0006979">
    <property type="term" value="P:response to oxidative stress"/>
    <property type="evidence" value="ECO:0000315"/>
    <property type="project" value="FlyBase"/>
</dbReference>
<dbReference type="GO" id="GO:0006105">
    <property type="term" value="P:succinate metabolic process"/>
    <property type="evidence" value="ECO:0000318"/>
    <property type="project" value="GO_Central"/>
</dbReference>
<dbReference type="CDD" id="cd20270">
    <property type="entry name" value="Complex1_LYR_SDHAF3_LYRM10"/>
    <property type="match status" value="1"/>
</dbReference>
<dbReference type="InterPro" id="IPR008381">
    <property type="entry name" value="SDHAF3/Sdh7"/>
</dbReference>
<dbReference type="PANTHER" id="PTHR13137">
    <property type="entry name" value="DC11 ACN9 HOMOLOG"/>
    <property type="match status" value="1"/>
</dbReference>
<dbReference type="PANTHER" id="PTHR13137:SF6">
    <property type="entry name" value="SUCCINATE DEHYDROGENASE ASSEMBLY FACTOR 3, MITOCHONDRIAL"/>
    <property type="match status" value="1"/>
</dbReference>
<dbReference type="Pfam" id="PF13233">
    <property type="entry name" value="Complex1_LYR_2"/>
    <property type="match status" value="1"/>
</dbReference>
<organism>
    <name type="scientific">Drosophila melanogaster</name>
    <name type="common">Fruit fly</name>
    <dbReference type="NCBI Taxonomy" id="7227"/>
    <lineage>
        <taxon>Eukaryota</taxon>
        <taxon>Metazoa</taxon>
        <taxon>Ecdysozoa</taxon>
        <taxon>Arthropoda</taxon>
        <taxon>Hexapoda</taxon>
        <taxon>Insecta</taxon>
        <taxon>Pterygota</taxon>
        <taxon>Neoptera</taxon>
        <taxon>Endopterygota</taxon>
        <taxon>Diptera</taxon>
        <taxon>Brachycera</taxon>
        <taxon>Muscomorpha</taxon>
        <taxon>Ephydroidea</taxon>
        <taxon>Drosophilidae</taxon>
        <taxon>Drosophila</taxon>
        <taxon>Sophophora</taxon>
    </lineage>
</organism>
<comment type="function">
    <text evidence="3">Plays an essential role in the assembly of succinate dehydrogenase (SDH), an enzyme complex (also referred to as respiratory complex II) that is a component of both the tricarboxylic acid (TCA) cycle and the mitochondrial electron transport chain, and which couples the oxidation of succinate to fumarate with the reduction of ubiquinone (coenzyme Q) to ubiquinol. Promotes maturation of the iron-sulfur protein subunit SdhB of the SDH catalytic dimer, protecting it from the deleterious effects of oxidants.</text>
</comment>
<comment type="subunit">
    <text evidence="1">Interacts with SdhB within an SdhA-SdhB subcomplex.</text>
</comment>
<comment type="subcellular location">
    <subcellularLocation>
        <location evidence="1">Mitochondrion matrix</location>
    </subcellularLocation>
</comment>
<comment type="disruption phenotype">
    <text evidence="3">Reduces the SdhB protein level resulting in an approximate 50% reduction in SDH enzymatic activity.</text>
</comment>
<comment type="similarity">
    <text evidence="5">Belongs to the complex I LYR family. SDHAF3 subfamily.</text>
</comment>
<protein>
    <recommendedName>
        <fullName evidence="4">Succinate dehydrogenase assembly factor 3, mitochondrial</fullName>
        <shortName>SDH assembly factor 3</shortName>
        <shortName evidence="4">SDHAF3</shortName>
    </recommendedName>
</protein>
<reference key="1">
    <citation type="journal article" date="2000" name="Science">
        <title>The genome sequence of Drosophila melanogaster.</title>
        <authorList>
            <person name="Adams M.D."/>
            <person name="Celniker S.E."/>
            <person name="Holt R.A."/>
            <person name="Evans C.A."/>
            <person name="Gocayne J.D."/>
            <person name="Amanatides P.G."/>
            <person name="Scherer S.E."/>
            <person name="Li P.W."/>
            <person name="Hoskins R.A."/>
            <person name="Galle R.F."/>
            <person name="George R.A."/>
            <person name="Lewis S.E."/>
            <person name="Richards S."/>
            <person name="Ashburner M."/>
            <person name="Henderson S.N."/>
            <person name="Sutton G.G."/>
            <person name="Wortman J.R."/>
            <person name="Yandell M.D."/>
            <person name="Zhang Q."/>
            <person name="Chen L.X."/>
            <person name="Brandon R.C."/>
            <person name="Rogers Y.-H.C."/>
            <person name="Blazej R.G."/>
            <person name="Champe M."/>
            <person name="Pfeiffer B.D."/>
            <person name="Wan K.H."/>
            <person name="Doyle C."/>
            <person name="Baxter E.G."/>
            <person name="Helt G."/>
            <person name="Nelson C.R."/>
            <person name="Miklos G.L.G."/>
            <person name="Abril J.F."/>
            <person name="Agbayani A."/>
            <person name="An H.-J."/>
            <person name="Andrews-Pfannkoch C."/>
            <person name="Baldwin D."/>
            <person name="Ballew R.M."/>
            <person name="Basu A."/>
            <person name="Baxendale J."/>
            <person name="Bayraktaroglu L."/>
            <person name="Beasley E.M."/>
            <person name="Beeson K.Y."/>
            <person name="Benos P.V."/>
            <person name="Berman B.P."/>
            <person name="Bhandari D."/>
            <person name="Bolshakov S."/>
            <person name="Borkova D."/>
            <person name="Botchan M.R."/>
            <person name="Bouck J."/>
            <person name="Brokstein P."/>
            <person name="Brottier P."/>
            <person name="Burtis K.C."/>
            <person name="Busam D.A."/>
            <person name="Butler H."/>
            <person name="Cadieu E."/>
            <person name="Center A."/>
            <person name="Chandra I."/>
            <person name="Cherry J.M."/>
            <person name="Cawley S."/>
            <person name="Dahlke C."/>
            <person name="Davenport L.B."/>
            <person name="Davies P."/>
            <person name="de Pablos B."/>
            <person name="Delcher A."/>
            <person name="Deng Z."/>
            <person name="Mays A.D."/>
            <person name="Dew I."/>
            <person name="Dietz S.M."/>
            <person name="Dodson K."/>
            <person name="Doup L.E."/>
            <person name="Downes M."/>
            <person name="Dugan-Rocha S."/>
            <person name="Dunkov B.C."/>
            <person name="Dunn P."/>
            <person name="Durbin K.J."/>
            <person name="Evangelista C.C."/>
            <person name="Ferraz C."/>
            <person name="Ferriera S."/>
            <person name="Fleischmann W."/>
            <person name="Fosler C."/>
            <person name="Gabrielian A.E."/>
            <person name="Garg N.S."/>
            <person name="Gelbart W.M."/>
            <person name="Glasser K."/>
            <person name="Glodek A."/>
            <person name="Gong F."/>
            <person name="Gorrell J.H."/>
            <person name="Gu Z."/>
            <person name="Guan P."/>
            <person name="Harris M."/>
            <person name="Harris N.L."/>
            <person name="Harvey D.A."/>
            <person name="Heiman T.J."/>
            <person name="Hernandez J.R."/>
            <person name="Houck J."/>
            <person name="Hostin D."/>
            <person name="Houston K.A."/>
            <person name="Howland T.J."/>
            <person name="Wei M.-H."/>
            <person name="Ibegwam C."/>
            <person name="Jalali M."/>
            <person name="Kalush F."/>
            <person name="Karpen G.H."/>
            <person name="Ke Z."/>
            <person name="Kennison J.A."/>
            <person name="Ketchum K.A."/>
            <person name="Kimmel B.E."/>
            <person name="Kodira C.D."/>
            <person name="Kraft C.L."/>
            <person name="Kravitz S."/>
            <person name="Kulp D."/>
            <person name="Lai Z."/>
            <person name="Lasko P."/>
            <person name="Lei Y."/>
            <person name="Levitsky A.A."/>
            <person name="Li J.H."/>
            <person name="Li Z."/>
            <person name="Liang Y."/>
            <person name="Lin X."/>
            <person name="Liu X."/>
            <person name="Mattei B."/>
            <person name="McIntosh T.C."/>
            <person name="McLeod M.P."/>
            <person name="McPherson D."/>
            <person name="Merkulov G."/>
            <person name="Milshina N.V."/>
            <person name="Mobarry C."/>
            <person name="Morris J."/>
            <person name="Moshrefi A."/>
            <person name="Mount S.M."/>
            <person name="Moy M."/>
            <person name="Murphy B."/>
            <person name="Murphy L."/>
            <person name="Muzny D.M."/>
            <person name="Nelson D.L."/>
            <person name="Nelson D.R."/>
            <person name="Nelson K.A."/>
            <person name="Nixon K."/>
            <person name="Nusskern D.R."/>
            <person name="Pacleb J.M."/>
            <person name="Palazzolo M."/>
            <person name="Pittman G.S."/>
            <person name="Pan S."/>
            <person name="Pollard J."/>
            <person name="Puri V."/>
            <person name="Reese M.G."/>
            <person name="Reinert K."/>
            <person name="Remington K."/>
            <person name="Saunders R.D.C."/>
            <person name="Scheeler F."/>
            <person name="Shen H."/>
            <person name="Shue B.C."/>
            <person name="Siden-Kiamos I."/>
            <person name="Simpson M."/>
            <person name="Skupski M.P."/>
            <person name="Smith T.J."/>
            <person name="Spier E."/>
            <person name="Spradling A.C."/>
            <person name="Stapleton M."/>
            <person name="Strong R."/>
            <person name="Sun E."/>
            <person name="Svirskas R."/>
            <person name="Tector C."/>
            <person name="Turner R."/>
            <person name="Venter E."/>
            <person name="Wang A.H."/>
            <person name="Wang X."/>
            <person name="Wang Z.-Y."/>
            <person name="Wassarman D.A."/>
            <person name="Weinstock G.M."/>
            <person name="Weissenbach J."/>
            <person name="Williams S.M."/>
            <person name="Woodage T."/>
            <person name="Worley K.C."/>
            <person name="Wu D."/>
            <person name="Yang S."/>
            <person name="Yao Q.A."/>
            <person name="Ye J."/>
            <person name="Yeh R.-F."/>
            <person name="Zaveri J.S."/>
            <person name="Zhan M."/>
            <person name="Zhang G."/>
            <person name="Zhao Q."/>
            <person name="Zheng L."/>
            <person name="Zheng X.H."/>
            <person name="Zhong F.N."/>
            <person name="Zhong W."/>
            <person name="Zhou X."/>
            <person name="Zhu S.C."/>
            <person name="Zhu X."/>
            <person name="Smith H.O."/>
            <person name="Gibbs R.A."/>
            <person name="Myers E.W."/>
            <person name="Rubin G.M."/>
            <person name="Venter J.C."/>
        </authorList>
    </citation>
    <scope>NUCLEOTIDE SEQUENCE [LARGE SCALE GENOMIC DNA]</scope>
    <source>
        <strain>Berkeley</strain>
    </source>
</reference>
<reference key="2">
    <citation type="journal article" date="2002" name="Genome Biol.">
        <title>Annotation of the Drosophila melanogaster euchromatic genome: a systematic review.</title>
        <authorList>
            <person name="Misra S."/>
            <person name="Crosby M.A."/>
            <person name="Mungall C.J."/>
            <person name="Matthews B.B."/>
            <person name="Campbell K.S."/>
            <person name="Hradecky P."/>
            <person name="Huang Y."/>
            <person name="Kaminker J.S."/>
            <person name="Millburn G.H."/>
            <person name="Prochnik S.E."/>
            <person name="Smith C.D."/>
            <person name="Tupy J.L."/>
            <person name="Whitfield E.J."/>
            <person name="Bayraktaroglu L."/>
            <person name="Berman B.P."/>
            <person name="Bettencourt B.R."/>
            <person name="Celniker S.E."/>
            <person name="de Grey A.D.N.J."/>
            <person name="Drysdale R.A."/>
            <person name="Harris N.L."/>
            <person name="Richter J."/>
            <person name="Russo S."/>
            <person name="Schroeder A.J."/>
            <person name="Shu S.Q."/>
            <person name="Stapleton M."/>
            <person name="Yamada C."/>
            <person name="Ashburner M."/>
            <person name="Gelbart W.M."/>
            <person name="Rubin G.M."/>
            <person name="Lewis S.E."/>
        </authorList>
    </citation>
    <scope>GENOME REANNOTATION</scope>
    <source>
        <strain>Berkeley</strain>
    </source>
</reference>
<reference key="3">
    <citation type="journal article" date="2002" name="Genome Biol.">
        <title>A Drosophila full-length cDNA resource.</title>
        <authorList>
            <person name="Stapleton M."/>
            <person name="Carlson J.W."/>
            <person name="Brokstein P."/>
            <person name="Yu C."/>
            <person name="Champe M."/>
            <person name="George R.A."/>
            <person name="Guarin H."/>
            <person name="Kronmiller B."/>
            <person name="Pacleb J.M."/>
            <person name="Park S."/>
            <person name="Wan K.H."/>
            <person name="Rubin G.M."/>
            <person name="Celniker S.E."/>
        </authorList>
    </citation>
    <scope>NUCLEOTIDE SEQUENCE [LARGE SCALE MRNA]</scope>
    <source>
        <strain>Berkeley</strain>
        <tissue>Embryo</tissue>
    </source>
</reference>
<reference key="4">
    <citation type="journal article" date="2014" name="Cell Metab.">
        <title>The LYR factors SDHAF1 and SDHAF3 mediate maturation of the iron-sulfur subunit of succinate dehydrogenase.</title>
        <authorList>
            <person name="Na U."/>
            <person name="Yu W."/>
            <person name="Cox J."/>
            <person name="Bricker D.K."/>
            <person name="Brockmann K."/>
            <person name="Rutter J."/>
            <person name="Thummel C.S."/>
            <person name="Winge D.R."/>
        </authorList>
    </citation>
    <scope>FUNCTION</scope>
    <scope>DISRUPTION PHENOTYPE</scope>
</reference>
<evidence type="ECO:0000250" key="1">
    <source>
        <dbReference type="UniProtKB" id="Q04401"/>
    </source>
</evidence>
<evidence type="ECO:0000255" key="2"/>
<evidence type="ECO:0000269" key="3">
    <source>
    </source>
</evidence>
<evidence type="ECO:0000303" key="4">
    <source>
    </source>
</evidence>
<evidence type="ECO:0000305" key="5"/>
<evidence type="ECO:0000312" key="6">
    <source>
        <dbReference type="FlyBase" id="FBgn0038437"/>
    </source>
</evidence>
<accession>Q8SZ16</accession>
<accession>Q9VEU3</accession>
<proteinExistence type="evidence at transcript level"/>
<gene>
    <name evidence="4" type="primary">Sdhaf3</name>
    <name evidence="6" type="ORF">CG14898</name>
</gene>
<keyword id="KW-0143">Chaperone</keyword>
<keyword id="KW-0496">Mitochondrion</keyword>
<keyword id="KW-1185">Reference proteome</keyword>
<keyword id="KW-0809">Transit peptide</keyword>
<name>SDHF3_DROME</name>
<feature type="transit peptide" description="Mitochondrion" evidence="2">
    <location>
        <begin position="1"/>
        <end position="36"/>
    </location>
</feature>
<feature type="chain" id="PRO_0000431383" description="Succinate dehydrogenase assembly factor 3, mitochondrial">
    <location>
        <begin position="37"/>
        <end position="120"/>
    </location>
</feature>
<sequence>MSRILMSQLTHPQRVRLLYKTILRLHRGLPAELRALGDNYVRDEFRRHLKCNPMEAQLFMTEWARYASTITQQLGIRGKPKGELGEEIDPKTVEMLKDDQVVQLYELMLAAKGVEDAQGK</sequence>